<proteinExistence type="evidence at protein level"/>
<feature type="chain" id="PRO_0000461029" description="C-glycoside deglycosidase beta subunit">
    <location>
        <begin position="1"/>
        <end position="132"/>
    </location>
</feature>
<feature type="turn" evidence="7">
    <location>
        <begin position="3"/>
        <end position="5"/>
    </location>
</feature>
<feature type="helix" evidence="7">
    <location>
        <begin position="10"/>
        <end position="12"/>
    </location>
</feature>
<feature type="strand" evidence="7">
    <location>
        <begin position="13"/>
        <end position="16"/>
    </location>
</feature>
<feature type="strand" evidence="7">
    <location>
        <begin position="19"/>
        <end position="23"/>
    </location>
</feature>
<feature type="strand" evidence="7">
    <location>
        <begin position="27"/>
        <end position="30"/>
    </location>
</feature>
<feature type="helix" evidence="7">
    <location>
        <begin position="34"/>
        <end position="36"/>
    </location>
</feature>
<feature type="strand" evidence="7">
    <location>
        <begin position="37"/>
        <end position="44"/>
    </location>
</feature>
<feature type="helix" evidence="7">
    <location>
        <begin position="51"/>
        <end position="53"/>
    </location>
</feature>
<feature type="strand" evidence="7">
    <location>
        <begin position="55"/>
        <end position="58"/>
    </location>
</feature>
<feature type="strand" evidence="7">
    <location>
        <begin position="61"/>
        <end position="63"/>
    </location>
</feature>
<feature type="helix" evidence="7">
    <location>
        <begin position="65"/>
        <end position="70"/>
    </location>
</feature>
<feature type="strand" evidence="7">
    <location>
        <begin position="83"/>
        <end position="87"/>
    </location>
</feature>
<feature type="strand" evidence="7">
    <location>
        <begin position="97"/>
        <end position="114"/>
    </location>
</feature>
<feature type="strand" evidence="7">
    <location>
        <begin position="117"/>
        <end position="130"/>
    </location>
</feature>
<reference key="1">
    <citation type="submission" date="2011-12" db="EMBL/GenBank/DDBJ databases">
        <title>Whole genome shotgun sequence of Arthrobacter globiformis NBRC 12137.</title>
        <authorList>
            <person name="Miyazawa S."/>
            <person name="Hosoyama A."/>
            <person name="Tsuchikane K."/>
            <person name="Katsumata H."/>
            <person name="Yamazaki S."/>
            <person name="Fujita N."/>
        </authorList>
    </citation>
    <scope>NUCLEOTIDE SEQUENCE [LARGE SCALE GENOMIC DNA]</scope>
    <source>
        <strain>ATCC 8010 / DSM 20124 / JCM 1332 / NBRC 12137 / NCIMB 8907 / NRRL B-2979 / 168</strain>
    </source>
</reference>
<reference evidence="5 6" key="2">
    <citation type="journal article" date="2021" name="Nat. Commun.">
        <title>C-Glycoside metabolism in the gut and in nature: Identification, characterization, structural analyses and distribution of C-C bond-cleaving enzymes.</title>
        <authorList>
            <person name="Mori T."/>
            <person name="Kumano T."/>
            <person name="He H."/>
            <person name="Watanabe S."/>
            <person name="Senda M."/>
            <person name="Moriya T."/>
            <person name="Adachi N."/>
            <person name="Hori S."/>
            <person name="Terashita Y."/>
            <person name="Kawasaki M."/>
            <person name="Hashimoto Y."/>
            <person name="Awakawa T."/>
            <person name="Senda T."/>
            <person name="Abe I."/>
            <person name="Kobayashi M."/>
        </authorList>
    </citation>
    <scope>X-RAY CRYSTALLOGRAPHY (2.25 ANGSTROMS) IN COMPLEX WITH CARB2; MN(2+) AND HOMOORIENTIN</scope>
    <scope>FUNCTION</scope>
    <scope>CATALYTIC ACTIVITY</scope>
    <scope>COFACTOR</scope>
    <scope>ACTIVITY REGULATION</scope>
    <scope>BIOPHYSICOCHEMICAL PROPERTIES</scope>
    <scope>SUBUNIT</scope>
    <source>
        <strain>ATCC 8010 / DSM 20124 / JCM 1332 / NBRC 12137 / NCIMB 8907 / NRRL B-2979 / 168</strain>
    </source>
</reference>
<dbReference type="EC" id="4.1.99.-" evidence="1"/>
<dbReference type="EMBL" id="BAEG01000075">
    <property type="protein sequence ID" value="GAB14769.1"/>
    <property type="molecule type" value="Genomic_DNA"/>
</dbReference>
<dbReference type="RefSeq" id="WP_003803554.1">
    <property type="nucleotide sequence ID" value="NZ_BAEG01000075.1"/>
</dbReference>
<dbReference type="PDB" id="7DNM">
    <property type="method" value="X-ray"/>
    <property type="resolution" value="2.30 A"/>
    <property type="chains" value="B/Q=1-132"/>
</dbReference>
<dbReference type="PDB" id="7DNN">
    <property type="method" value="X-ray"/>
    <property type="resolution" value="2.25 A"/>
    <property type="chains" value="B/Q=1-132"/>
</dbReference>
<dbReference type="PDBsum" id="7DNM"/>
<dbReference type="PDBsum" id="7DNN"/>
<dbReference type="SMR" id="H0QPL8"/>
<dbReference type="STRING" id="1077972.ARGLB_075_00520"/>
<dbReference type="eggNOG" id="COG1082">
    <property type="taxonomic scope" value="Bacteria"/>
</dbReference>
<dbReference type="OrthoDB" id="1494151at2"/>
<dbReference type="Proteomes" id="UP000003828">
    <property type="component" value="Unassembled WGS sequence"/>
</dbReference>
<dbReference type="GO" id="GO:0016829">
    <property type="term" value="F:lyase activity"/>
    <property type="evidence" value="ECO:0007669"/>
    <property type="project" value="UniProtKB-KW"/>
</dbReference>
<dbReference type="InterPro" id="IPR045959">
    <property type="entry name" value="CGDB"/>
</dbReference>
<dbReference type="Pfam" id="PF19906">
    <property type="entry name" value="CGDB"/>
    <property type="match status" value="1"/>
</dbReference>
<sequence>MATHNSLFQDSDVRKHPEGIAVSVQLPWYRSLWLSAVDDVAATVNGVKIPRESLRFELQGQTYSIAELPEQWETLWFVADKPDVVIPLDRIPDAGEEIDVEVILTLRLLYMQIAPMRYVGNRVAVERKVVLA</sequence>
<keyword id="KW-0002">3D-structure</keyword>
<keyword id="KW-0119">Carbohydrate metabolism</keyword>
<keyword id="KW-0456">Lyase</keyword>
<keyword id="KW-1185">Reference proteome</keyword>
<organism>
    <name type="scientific">Arthrobacter globiformis (strain ATCC 8010 / DSM 20124 / JCM 1332 / NBRC 12137 / NCIMB 8907 / NRRL B-2979 / 168)</name>
    <dbReference type="NCBI Taxonomy" id="1077972"/>
    <lineage>
        <taxon>Bacteria</taxon>
        <taxon>Bacillati</taxon>
        <taxon>Actinomycetota</taxon>
        <taxon>Actinomycetes</taxon>
        <taxon>Micrococcales</taxon>
        <taxon>Micrococcaceae</taxon>
        <taxon>Arthrobacter</taxon>
    </lineage>
</organism>
<protein>
    <recommendedName>
        <fullName evidence="2">C-glycoside deglycosidase beta subunit</fullName>
        <shortName evidence="2">CGD beta subunit</shortName>
        <ecNumber evidence="1">4.1.99.-</ecNumber>
    </recommendedName>
    <alternativeName>
        <fullName evidence="2">AgCGD2 beta</fullName>
    </alternativeName>
    <alternativeName>
        <fullName evidence="2">C-deglycosylation enzyme beta subunit</fullName>
    </alternativeName>
</protein>
<comment type="function">
    <text evidence="1">Carbon-carbon bond-cleaving enzyme which participates in the metabolism of C-glycosides (PubMed:34728636). Acts on the C8-glycosylated compound 3''-dehydroorientin (3''-oxo-orientin) (PubMed:34728636).</text>
</comment>
<comment type="catalytic activity">
    <reaction evidence="1">
        <text>3''-dehydroorientin = 1,5-anhydro-D-erythro-hex-1-en-3-ulose + luteolin</text>
        <dbReference type="Rhea" id="RHEA:78767"/>
        <dbReference type="ChEBI" id="CHEBI:57545"/>
        <dbReference type="ChEBI" id="CHEBI:195275"/>
        <dbReference type="ChEBI" id="CHEBI:229564"/>
    </reaction>
</comment>
<comment type="cofactor">
    <cofactor evidence="1">
        <name>a divalent metal cation</name>
        <dbReference type="ChEBI" id="CHEBI:60240"/>
    </cofactor>
    <text evidence="1">Can use Mn(2+), Mg(2+), Ca(2+), Co(2+) and Ni(2+).</text>
</comment>
<comment type="activity regulation">
    <text evidence="1">Activity is strongly reduced in the presence of chelating agents.</text>
</comment>
<comment type="biophysicochemical properties">
    <kinetics>
        <text evidence="1">kcat is 40 min(-1) with 3''-dehydroorientin as substrate.</text>
    </kinetics>
    <temperatureDependence>
        <text evidence="1">Optimum temperature is around 40 degrees Celsius.</text>
    </temperatureDependence>
</comment>
<comment type="subunit">
    <text evidence="1">Heterodimer composed of an alpha subunit (CarB2) and a beta subunit (CarC2).</text>
</comment>
<comment type="similarity">
    <text evidence="3">Belongs to the C-glycoside deglycosidase beta subunit family.</text>
</comment>
<name>CGDB2_ARTG1</name>
<evidence type="ECO:0000269" key="1">
    <source>
    </source>
</evidence>
<evidence type="ECO:0000303" key="2">
    <source>
    </source>
</evidence>
<evidence type="ECO:0000305" key="3"/>
<evidence type="ECO:0000312" key="4">
    <source>
        <dbReference type="EMBL" id="GAB14769.1"/>
    </source>
</evidence>
<evidence type="ECO:0007744" key="5">
    <source>
        <dbReference type="PDB" id="7DNM"/>
    </source>
</evidence>
<evidence type="ECO:0007744" key="6">
    <source>
        <dbReference type="PDB" id="7DNN"/>
    </source>
</evidence>
<evidence type="ECO:0007829" key="7">
    <source>
        <dbReference type="PDB" id="7DNN"/>
    </source>
</evidence>
<gene>
    <name evidence="2" type="primary">carC2</name>
    <name evidence="4" type="ORF">ARGLB_075_00520</name>
</gene>
<accession>H0QPL8</accession>